<evidence type="ECO:0000250" key="1"/>
<evidence type="ECO:0000269" key="2">
    <source>
    </source>
</evidence>
<evidence type="ECO:0000305" key="3"/>
<accession>P0CW41</accession>
<accession>D6VVX6</accession>
<accession>P40439</accession>
<proteinExistence type="inferred from homology"/>
<dbReference type="EC" id="3.2.1.10"/>
<dbReference type="EMBL" id="Z34098">
    <property type="protein sequence ID" value="CAA83990.1"/>
    <property type="molecule type" value="Genomic_DNA"/>
</dbReference>
<dbReference type="EMBL" id="Z49496">
    <property type="protein sequence ID" value="CAA89517.1"/>
    <property type="molecule type" value="Genomic_DNA"/>
</dbReference>
<dbReference type="EMBL" id="BK006943">
    <property type="protein sequence ID" value="DAA08592.1"/>
    <property type="molecule type" value="Genomic_DNA"/>
</dbReference>
<dbReference type="PIR" id="S50355">
    <property type="entry name" value="S50355"/>
</dbReference>
<dbReference type="RefSeq" id="NP_012314.1">
    <property type="nucleotide sequence ID" value="NM_001181654.1"/>
</dbReference>
<dbReference type="SMR" id="P0CW41"/>
<dbReference type="BioGRID" id="33561">
    <property type="interactions" value="14"/>
</dbReference>
<dbReference type="BioGRID" id="34824">
    <property type="interactions" value="5"/>
</dbReference>
<dbReference type="FunCoup" id="P0CW41">
    <property type="interactions" value="1107"/>
</dbReference>
<dbReference type="CAZy" id="GH13">
    <property type="family name" value="Glycoside Hydrolase Family 13"/>
</dbReference>
<dbReference type="GlyGen" id="P0CW41">
    <property type="glycosylation" value="1 site, 5 N-linked glycans (1 site)"/>
</dbReference>
<dbReference type="EnsemblFungi" id="YIL172C_mRNA">
    <property type="protein sequence ID" value="YIL172C"/>
    <property type="gene ID" value="YIL172C"/>
</dbReference>
<dbReference type="EnsemblFungi" id="YJL221C_mRNA">
    <property type="protein sequence ID" value="YJL221C"/>
    <property type="gene ID" value="YJL221C"/>
</dbReference>
<dbReference type="GeneID" id="853235"/>
<dbReference type="KEGG" id="sce:YIL172C"/>
<dbReference type="KEGG" id="sce:YJL221C"/>
<dbReference type="AGR" id="SGD:S000003757"/>
<dbReference type="SGD" id="S000003757">
    <property type="gene designation" value="IMA4"/>
</dbReference>
<dbReference type="VEuPathDB" id="FungiDB:YIL172C"/>
<dbReference type="VEuPathDB" id="FungiDB:YJL221C"/>
<dbReference type="GeneTree" id="ENSGT00940000176291"/>
<dbReference type="HOGENOM" id="CLU_006462_1_1_1"/>
<dbReference type="InParanoid" id="P0CW41"/>
<dbReference type="OMA" id="MNNHDVP"/>
<dbReference type="OrthoDB" id="1740265at2759"/>
<dbReference type="BioCyc" id="YEAST:YJL221C-MONOMER"/>
<dbReference type="Reactome" id="R-SCE-352230">
    <property type="pathway name" value="Amino acid transport across the plasma membrane"/>
</dbReference>
<dbReference type="PRO" id="PR:P0CW41"/>
<dbReference type="Proteomes" id="UP000002311">
    <property type="component" value="Chromosome X"/>
</dbReference>
<dbReference type="RNAct" id="P0CW41">
    <property type="molecule type" value="protein"/>
</dbReference>
<dbReference type="GO" id="GO:0004558">
    <property type="term" value="F:alpha-1,4-glucosidase activity"/>
    <property type="evidence" value="ECO:0000318"/>
    <property type="project" value="GO_Central"/>
</dbReference>
<dbReference type="GO" id="GO:0004556">
    <property type="term" value="F:alpha-amylase activity"/>
    <property type="evidence" value="ECO:0000318"/>
    <property type="project" value="GO_Central"/>
</dbReference>
<dbReference type="GO" id="GO:0033934">
    <property type="term" value="F:glucan 1,4-alpha-maltotriohydrolase activity"/>
    <property type="evidence" value="ECO:0000318"/>
    <property type="project" value="GO_Central"/>
</dbReference>
<dbReference type="GO" id="GO:0004574">
    <property type="term" value="F:oligo-1,6-glucosidase activity"/>
    <property type="evidence" value="ECO:0000315"/>
    <property type="project" value="SGD"/>
</dbReference>
<dbReference type="GO" id="GO:0004575">
    <property type="term" value="F:sucrose alpha-glucosidase activity"/>
    <property type="evidence" value="ECO:0000318"/>
    <property type="project" value="GO_Central"/>
</dbReference>
<dbReference type="GO" id="GO:0046352">
    <property type="term" value="P:disaccharide catabolic process"/>
    <property type="evidence" value="ECO:0000316"/>
    <property type="project" value="SGD"/>
</dbReference>
<dbReference type="GO" id="GO:0000025">
    <property type="term" value="P:maltose catabolic process"/>
    <property type="evidence" value="ECO:0000318"/>
    <property type="project" value="GO_Central"/>
</dbReference>
<dbReference type="GO" id="GO:0005987">
    <property type="term" value="P:sucrose catabolic process"/>
    <property type="evidence" value="ECO:0000318"/>
    <property type="project" value="GO_Central"/>
</dbReference>
<dbReference type="CDD" id="cd11333">
    <property type="entry name" value="AmyAc_SI_OligoGlu_DGase"/>
    <property type="match status" value="1"/>
</dbReference>
<dbReference type="FunFam" id="3.20.20.80:FF:000064">
    <property type="entry name" value="Oligo-1,6-glucosidase"/>
    <property type="match status" value="1"/>
</dbReference>
<dbReference type="FunFam" id="3.90.400.10:FF:000004">
    <property type="entry name" value="Oligo-1,6-glucosidase"/>
    <property type="match status" value="1"/>
</dbReference>
<dbReference type="FunFam" id="2.60.40.1180:FF:000027">
    <property type="entry name" value="Oligo-1,6-glucosidase IMA1"/>
    <property type="match status" value="1"/>
</dbReference>
<dbReference type="FunFam" id="3.20.20.80:FF:000087">
    <property type="entry name" value="Oligo-1,6-glucosidase IMA1"/>
    <property type="match status" value="1"/>
</dbReference>
<dbReference type="Gene3D" id="3.20.20.80">
    <property type="entry name" value="Glycosidases"/>
    <property type="match status" value="2"/>
</dbReference>
<dbReference type="Gene3D" id="2.60.40.1180">
    <property type="entry name" value="Golgi alpha-mannosidase II"/>
    <property type="match status" value="1"/>
</dbReference>
<dbReference type="Gene3D" id="3.90.400.10">
    <property type="entry name" value="Oligo-1,6-glucosidase, Domain 2"/>
    <property type="match status" value="1"/>
</dbReference>
<dbReference type="InterPro" id="IPR006047">
    <property type="entry name" value="Glyco_hydro_13_cat_dom"/>
</dbReference>
<dbReference type="InterPro" id="IPR013780">
    <property type="entry name" value="Glyco_hydro_b"/>
</dbReference>
<dbReference type="InterPro" id="IPR017853">
    <property type="entry name" value="Glycoside_hydrolase_SF"/>
</dbReference>
<dbReference type="InterPro" id="IPR045857">
    <property type="entry name" value="O16G_dom_2"/>
</dbReference>
<dbReference type="PANTHER" id="PTHR10357">
    <property type="entry name" value="ALPHA-AMYLASE FAMILY MEMBER"/>
    <property type="match status" value="1"/>
</dbReference>
<dbReference type="PANTHER" id="PTHR10357:SF179">
    <property type="entry name" value="NEUTRAL AND BASIC AMINO ACID TRANSPORT PROTEIN RBAT"/>
    <property type="match status" value="1"/>
</dbReference>
<dbReference type="Pfam" id="PF00128">
    <property type="entry name" value="Alpha-amylase"/>
    <property type="match status" value="1"/>
</dbReference>
<dbReference type="SMART" id="SM00642">
    <property type="entry name" value="Aamy"/>
    <property type="match status" value="1"/>
</dbReference>
<dbReference type="SUPFAM" id="SSF51445">
    <property type="entry name" value="(Trans)glycosidases"/>
    <property type="match status" value="1"/>
</dbReference>
<dbReference type="SUPFAM" id="SSF51011">
    <property type="entry name" value="Glycosyl hydrolase domain"/>
    <property type="match status" value="1"/>
</dbReference>
<reference key="1">
    <citation type="journal article" date="1994" name="Yeast">
        <title>Sequence analysis of a 40.2 kb DNA fragment located near the left telomere of yeast chromosome X.</title>
        <authorList>
            <person name="Vandenbol M."/>
            <person name="Durand P."/>
            <person name="Bolle P.-A."/>
            <person name="Dion C."/>
            <person name="Portetelle D."/>
            <person name="Hilger F."/>
        </authorList>
    </citation>
    <scope>NUCLEOTIDE SEQUENCE [GENOMIC DNA]</scope>
    <source>
        <strain>ATCC 204508 / S288c</strain>
    </source>
</reference>
<reference key="2">
    <citation type="journal article" date="1996" name="EMBO J.">
        <title>Complete nucleotide sequence of Saccharomyces cerevisiae chromosome X.</title>
        <authorList>
            <person name="Galibert F."/>
            <person name="Alexandraki D."/>
            <person name="Baur A."/>
            <person name="Boles E."/>
            <person name="Chalwatzis N."/>
            <person name="Chuat J.-C."/>
            <person name="Coster F."/>
            <person name="Cziepluch C."/>
            <person name="de Haan M."/>
            <person name="Domdey H."/>
            <person name="Durand P."/>
            <person name="Entian K.-D."/>
            <person name="Gatius M."/>
            <person name="Goffeau A."/>
            <person name="Grivell L.A."/>
            <person name="Hennemann A."/>
            <person name="Herbert C.J."/>
            <person name="Heumann K."/>
            <person name="Hilger F."/>
            <person name="Hollenberg C.P."/>
            <person name="Huang M.-E."/>
            <person name="Jacq C."/>
            <person name="Jauniaux J.-C."/>
            <person name="Katsoulou C."/>
            <person name="Kirchrath L."/>
            <person name="Kleine K."/>
            <person name="Kordes E."/>
            <person name="Koetter P."/>
            <person name="Liebl S."/>
            <person name="Louis E.J."/>
            <person name="Manus V."/>
            <person name="Mewes H.-W."/>
            <person name="Miosga T."/>
            <person name="Obermaier B."/>
            <person name="Perea J."/>
            <person name="Pohl T.M."/>
            <person name="Portetelle D."/>
            <person name="Pujol A."/>
            <person name="Purnelle B."/>
            <person name="Ramezani Rad M."/>
            <person name="Rasmussen S.W."/>
            <person name="Rose M."/>
            <person name="Rossau R."/>
            <person name="Schaaff-Gerstenschlaeger I."/>
            <person name="Smits P.H.M."/>
            <person name="Scarcez T."/>
            <person name="Soriano N."/>
            <person name="To Van D."/>
            <person name="Tzermia M."/>
            <person name="Van Broekhoven A."/>
            <person name="Vandenbol M."/>
            <person name="Wedler H."/>
            <person name="von Wettstein D."/>
            <person name="Wambutt R."/>
            <person name="Zagulski M."/>
            <person name="Zollner A."/>
            <person name="Karpfinger-Hartl L."/>
        </authorList>
    </citation>
    <scope>NUCLEOTIDE SEQUENCE [LARGE SCALE GENOMIC DNA]</scope>
    <source>
        <strain>ATCC 204508 / S288c</strain>
    </source>
</reference>
<reference key="3">
    <citation type="journal article" date="2014" name="G3 (Bethesda)">
        <title>The reference genome sequence of Saccharomyces cerevisiae: Then and now.</title>
        <authorList>
            <person name="Engel S.R."/>
            <person name="Dietrich F.S."/>
            <person name="Fisk D.G."/>
            <person name="Binkley G."/>
            <person name="Balakrishnan R."/>
            <person name="Costanzo M.C."/>
            <person name="Dwight S.S."/>
            <person name="Hitz B.C."/>
            <person name="Karra K."/>
            <person name="Nash R.S."/>
            <person name="Weng S."/>
            <person name="Wong E.D."/>
            <person name="Lloyd P."/>
            <person name="Skrzypek M.S."/>
            <person name="Miyasato S.R."/>
            <person name="Simison M."/>
            <person name="Cherry J.M."/>
        </authorList>
    </citation>
    <scope>GENOME REANNOTATION</scope>
    <source>
        <strain>ATCC 204508 / S288c</strain>
    </source>
</reference>
<reference key="4">
    <citation type="journal article" date="2010" name="J. Biol. Chem.">
        <title>Characterization of a new multigene family encoding isomaltases in the yeast Saccharomyces cerevisiae, the IMA family.</title>
        <authorList>
            <person name="Teste M.A."/>
            <person name="Francois J.M."/>
            <person name="Parrou J.L."/>
        </authorList>
    </citation>
    <scope>FUNCTION</scope>
</reference>
<sequence length="589" mass="68699">MTISSAHPETEPKWWKEATIYQIYPASFKDSNNDGWGDMKGIASKLEYIKELGTDAIWISPFYDSPQDDMGYDIANYEKVWPTYGTNEDCFALIEKTHKLGMKFITDLVINHCSSEHEWFKESRSSKTNPKRDWFFWRPPKGYDAEGKPIPPNNWRSYFGGSAWTFDEKTQEFYLRLFCSTQPDLNWENEDCRKAIYESAVGYWLDHGVDGFRIDVGSLYSKVAGLPDAPVIDENSKWQLSDPFTMNGPRIHEFHQEMNKFIRNRVKDGREIMTVGEMRHATDETKRLYTSASRHELSELFNFSHTDVGTSPKFRQNLIPYELKDWKVALAELFRYVNGTDCWSTIYLENHDQPRSITRFGDDSPKNRVISGKLLSVLLVSLSGTLYVYQGQELGEINFKNWPIEKYEDVEVRNNYDAIKEEHGENSKEMKRFLEAIALISRDHARTPMQWSREEPNAGFSGPNAKPWFYLNESFREGINAEDESKDPNSVLNFWKEALRFRKAHKDITVYGYDFEFIDLDNKKLFSFTKKYDNKTLFAALNFSSDSIDFTIPNNSSSFKLEFGNYPRSEVDASSRTLKPWEGRIYISE</sequence>
<gene>
    <name type="primary">IMA4</name>
    <name type="synonym">FSP2</name>
    <name type="ordered locus">YJL221C</name>
    <name type="ORF">HRE589</name>
    <name type="ORF">J0218</name>
</gene>
<comment type="function">
    <text evidence="2">Alpha-glucosidase with broad substrate specificity for alpha-1,4- and alpha-1,6-glucosides. Not required for isomaltose utilization, but overexpression allows the IMA1 null mutant to grow on isomaltose.</text>
</comment>
<comment type="catalytic activity">
    <reaction>
        <text>Hydrolysis of (1-&gt;6)-alpha-D-glucosidic linkages in some oligosaccharides produced from starch and glycogen by alpha-amylase, and in isomaltose.</text>
        <dbReference type="EC" id="3.2.1.10"/>
    </reaction>
</comment>
<comment type="similarity">
    <text evidence="3">Belongs to the glycosyl hydrolase 13 family.</text>
</comment>
<keyword id="KW-0326">Glycosidase</keyword>
<keyword id="KW-0378">Hydrolase</keyword>
<keyword id="KW-0462">Maltose metabolism</keyword>
<keyword id="KW-1185">Reference proteome</keyword>
<protein>
    <recommendedName>
        <fullName>Oligo-1,6-glucosidase IMA4</fullName>
        <ecNumber>3.2.1.10</ecNumber>
    </recommendedName>
    <alternativeName>
        <fullName>Alpha-glucosidase</fullName>
    </alternativeName>
    <alternativeName>
        <fullName>Flocculent-specific protein 2</fullName>
    </alternativeName>
    <alternativeName>
        <fullName>Isomaltase 4</fullName>
    </alternativeName>
</protein>
<name>MALX4_YEAST</name>
<feature type="chain" id="PRO_0000408197" description="Oligo-1,6-glucosidase IMA4">
    <location>
        <begin position="1"/>
        <end position="589"/>
    </location>
</feature>
<feature type="active site" description="Nucleophile" evidence="1">
    <location>
        <position position="215"/>
    </location>
</feature>
<feature type="active site" description="Proton donor" evidence="1">
    <location>
        <position position="277"/>
    </location>
</feature>
<feature type="site" description="Transition state stabilizer" evidence="1">
    <location>
        <position position="352"/>
    </location>
</feature>
<organism>
    <name type="scientific">Saccharomyces cerevisiae (strain ATCC 204508 / S288c)</name>
    <name type="common">Baker's yeast</name>
    <dbReference type="NCBI Taxonomy" id="559292"/>
    <lineage>
        <taxon>Eukaryota</taxon>
        <taxon>Fungi</taxon>
        <taxon>Dikarya</taxon>
        <taxon>Ascomycota</taxon>
        <taxon>Saccharomycotina</taxon>
        <taxon>Saccharomycetes</taxon>
        <taxon>Saccharomycetales</taxon>
        <taxon>Saccharomycetaceae</taxon>
        <taxon>Saccharomyces</taxon>
    </lineage>
</organism>